<comment type="function">
    <text evidence="1">Variant histone H2A which replaces conventional H2A in a subset of nucleosomes. Nucleosomes wrap and compact DNA into chromatin, limiting DNA accessibility to the cellular machineries which require DNA as a template. Histones thereby play a central role in transcription regulation, DNA repair, DNA replication and chromosomal stability. DNA accessibility is regulated via a complex set of post-translational modifications of histones, also called histone code, and nucleosome remodeling. May be involved in the formation of constitutive heterochromatin. May be required for chromosome segregation during cell division (By similarity).</text>
</comment>
<comment type="subunit">
    <text evidence="1">The nucleosome is a histone octamer containing two molecules each of H2A, H2B, H3 and H4 assembled in one H3-H4 heterotetramer and two H2A-H2B heterodimers. The octamer wraps approximately 147 bp of DNA. H2A or its variant H2AZ2 forms a heterodimer with H2B (By similarity).</text>
</comment>
<comment type="subcellular location">
    <subcellularLocation>
        <location evidence="1">Nucleus</location>
    </subcellularLocation>
    <subcellularLocation>
        <location evidence="1">Chromosome</location>
    </subcellularLocation>
</comment>
<comment type="PTM">
    <text evidence="1">Monoubiquitination of Lys-122 gives a specific tag for epigenetic transcriptional repression.</text>
</comment>
<comment type="PTM">
    <text evidence="1">Acetylated on Lys-5, Lys-8 and Lys-12 when associated with the 5'-end of active genes.</text>
</comment>
<comment type="similarity">
    <text evidence="4">Belongs to the histone H2A family.</text>
</comment>
<dbReference type="EMBL" id="BC074203">
    <property type="protein sequence ID" value="AAH74203.1"/>
    <property type="molecule type" value="mRNA"/>
</dbReference>
<dbReference type="EMBL" id="BC078599">
    <property type="protein sequence ID" value="AAH78599.1"/>
    <property type="molecule type" value="mRNA"/>
</dbReference>
<dbReference type="SMR" id="Q6GM74"/>
<dbReference type="DNASU" id="447174"/>
<dbReference type="GeneID" id="444541"/>
<dbReference type="KEGG" id="xla:444541"/>
<dbReference type="KEGG" id="xla:447174"/>
<dbReference type="CTD" id="444541"/>
<dbReference type="OrthoDB" id="9421954at2759"/>
<dbReference type="Proteomes" id="UP000186698">
    <property type="component" value="Chromosome 3L"/>
</dbReference>
<dbReference type="Proteomes" id="UP000186698">
    <property type="component" value="Chromosome 3S"/>
</dbReference>
<dbReference type="Bgee" id="444541">
    <property type="expression patterns" value="Expressed in internal ear and 19 other cell types or tissues"/>
</dbReference>
<dbReference type="GO" id="GO:0000786">
    <property type="term" value="C:nucleosome"/>
    <property type="evidence" value="ECO:0000318"/>
    <property type="project" value="GO_Central"/>
</dbReference>
<dbReference type="GO" id="GO:0005634">
    <property type="term" value="C:nucleus"/>
    <property type="evidence" value="ECO:0000318"/>
    <property type="project" value="GO_Central"/>
</dbReference>
<dbReference type="GO" id="GO:0003677">
    <property type="term" value="F:DNA binding"/>
    <property type="evidence" value="ECO:0007669"/>
    <property type="project" value="UniProtKB-KW"/>
</dbReference>
<dbReference type="GO" id="GO:0046982">
    <property type="term" value="F:protein heterodimerization activity"/>
    <property type="evidence" value="ECO:0007669"/>
    <property type="project" value="InterPro"/>
</dbReference>
<dbReference type="GO" id="GO:0030527">
    <property type="term" value="F:structural constituent of chromatin"/>
    <property type="evidence" value="ECO:0000318"/>
    <property type="project" value="GO_Central"/>
</dbReference>
<dbReference type="GO" id="GO:0031507">
    <property type="term" value="P:heterochromatin formation"/>
    <property type="evidence" value="ECO:0000318"/>
    <property type="project" value="GO_Central"/>
</dbReference>
<dbReference type="CDD" id="cd00074">
    <property type="entry name" value="HFD_H2A"/>
    <property type="match status" value="1"/>
</dbReference>
<dbReference type="FunFam" id="1.10.20.10:FF:000005">
    <property type="entry name" value="Histone H2A"/>
    <property type="match status" value="1"/>
</dbReference>
<dbReference type="Gene3D" id="1.10.20.10">
    <property type="entry name" value="Histone, subunit A"/>
    <property type="match status" value="1"/>
</dbReference>
<dbReference type="InterPro" id="IPR009072">
    <property type="entry name" value="Histone-fold"/>
</dbReference>
<dbReference type="InterPro" id="IPR002119">
    <property type="entry name" value="Histone_H2A"/>
</dbReference>
<dbReference type="InterPro" id="IPR007125">
    <property type="entry name" value="Histone_H2A/H2B/H3"/>
</dbReference>
<dbReference type="InterPro" id="IPR032454">
    <property type="entry name" value="Histone_H2A_C"/>
</dbReference>
<dbReference type="InterPro" id="IPR032458">
    <property type="entry name" value="Histone_H2A_CS"/>
</dbReference>
<dbReference type="PANTHER" id="PTHR23430">
    <property type="entry name" value="HISTONE H2A"/>
    <property type="match status" value="1"/>
</dbReference>
<dbReference type="Pfam" id="PF00125">
    <property type="entry name" value="Histone"/>
    <property type="match status" value="1"/>
</dbReference>
<dbReference type="Pfam" id="PF16211">
    <property type="entry name" value="Histone_H2A_C"/>
    <property type="match status" value="1"/>
</dbReference>
<dbReference type="PRINTS" id="PR00620">
    <property type="entry name" value="HISTONEH2A"/>
</dbReference>
<dbReference type="SMART" id="SM00414">
    <property type="entry name" value="H2A"/>
    <property type="match status" value="1"/>
</dbReference>
<dbReference type="SUPFAM" id="SSF47113">
    <property type="entry name" value="Histone-fold"/>
    <property type="match status" value="1"/>
</dbReference>
<dbReference type="PROSITE" id="PS00046">
    <property type="entry name" value="HISTONE_H2A"/>
    <property type="match status" value="1"/>
</dbReference>
<reference key="1">
    <citation type="submission" date="2004-06" db="EMBL/GenBank/DDBJ databases">
        <authorList>
            <consortium name="NIH - Xenopus Gene Collection (XGC) project"/>
        </authorList>
    </citation>
    <scope>NUCLEOTIDE SEQUENCE [LARGE SCALE MRNA]</scope>
    <source>
        <tissue>Kidney</tissue>
    </source>
</reference>
<keyword id="KW-0007">Acetylation</keyword>
<keyword id="KW-0158">Chromosome</keyword>
<keyword id="KW-0217">Developmental protein</keyword>
<keyword id="KW-0238">DNA-binding</keyword>
<keyword id="KW-1017">Isopeptide bond</keyword>
<keyword id="KW-0544">Nucleosome core</keyword>
<keyword id="KW-0539">Nucleus</keyword>
<keyword id="KW-1185">Reference proteome</keyword>
<keyword id="KW-0832">Ubl conjugation</keyword>
<organism>
    <name type="scientific">Xenopus laevis</name>
    <name type="common">African clawed frog</name>
    <dbReference type="NCBI Taxonomy" id="8355"/>
    <lineage>
        <taxon>Eukaryota</taxon>
        <taxon>Metazoa</taxon>
        <taxon>Chordata</taxon>
        <taxon>Craniata</taxon>
        <taxon>Vertebrata</taxon>
        <taxon>Euteleostomi</taxon>
        <taxon>Amphibia</taxon>
        <taxon>Batrachia</taxon>
        <taxon>Anura</taxon>
        <taxon>Pipoidea</taxon>
        <taxon>Pipidae</taxon>
        <taxon>Xenopodinae</taxon>
        <taxon>Xenopus</taxon>
        <taxon>Xenopus</taxon>
    </lineage>
</organism>
<accession>Q6GM74</accession>
<gene>
    <name type="primary">h2az2</name>
</gene>
<feature type="initiator methionine" description="Removed" evidence="1">
    <location>
        <position position="1"/>
    </location>
</feature>
<feature type="chain" id="PRO_0000055306" description="Histone H2A.V">
    <location>
        <begin position="2"/>
        <end position="128"/>
    </location>
</feature>
<feature type="region of interest" description="Disordered" evidence="3">
    <location>
        <begin position="1"/>
        <end position="23"/>
    </location>
</feature>
<feature type="compositionally biased region" description="Basic and acidic residues" evidence="3">
    <location>
        <begin position="1"/>
        <end position="12"/>
    </location>
</feature>
<feature type="modified residue" description="N6-acetyllysine" evidence="1">
    <location>
        <position position="5"/>
    </location>
</feature>
<feature type="modified residue" description="N6-acetyllysine" evidence="1">
    <location>
        <position position="8"/>
    </location>
</feature>
<feature type="modified residue" description="N6-acetyllysine" evidence="1">
    <location>
        <position position="12"/>
    </location>
</feature>
<feature type="modified residue" description="N6-lactoyllysine; alternate" evidence="2">
    <location>
        <position position="12"/>
    </location>
</feature>
<feature type="modified residue" description="N6-lactoyllysine; alternate" evidence="2">
    <location>
        <position position="14"/>
    </location>
</feature>
<feature type="modified residue" description="N6-lactoyllysine" evidence="2">
    <location>
        <position position="116"/>
    </location>
</feature>
<feature type="cross-link" description="Glycyl lysine isopeptide (Lys-Gly) (interchain with G-Cter in ubiquitin)" evidence="1">
    <location>
        <position position="122"/>
    </location>
</feature>
<name>H2AV_XENLA</name>
<sequence length="128" mass="13509">MAGGKAGKDSGKAKAKAVSRSQRAGLQFPVGRIHRHLKTRTTSHGRVGATAAVYSAAILEYLTAEVLELAGNASKDLKVKRITPRHLQLAIRGDEELDSLIKATIAGGGVIPHIHKSLIGKKGQQKTA</sequence>
<proteinExistence type="evidence at transcript level"/>
<evidence type="ECO:0000250" key="1"/>
<evidence type="ECO:0000250" key="2">
    <source>
        <dbReference type="UniProtKB" id="P0C0S5"/>
    </source>
</evidence>
<evidence type="ECO:0000256" key="3">
    <source>
        <dbReference type="SAM" id="MobiDB-lite"/>
    </source>
</evidence>
<evidence type="ECO:0000305" key="4"/>
<protein>
    <recommendedName>
        <fullName>Histone H2A.V</fullName>
    </recommendedName>
    <alternativeName>
        <fullName>H2A.F/Z</fullName>
    </alternativeName>
</protein>